<evidence type="ECO:0000255" key="1">
    <source>
        <dbReference type="HAMAP-Rule" id="MF_00596"/>
    </source>
</evidence>
<proteinExistence type="inferred from homology"/>
<reference key="1">
    <citation type="submission" date="2007-08" db="EMBL/GenBank/DDBJ databases">
        <authorList>
            <consortium name="The Vibrio harveyi Genome Sequencing Project"/>
            <person name="Bassler B."/>
            <person name="Clifton S.W."/>
            <person name="Fulton L."/>
            <person name="Delehaunty K."/>
            <person name="Fronick C."/>
            <person name="Harrison M."/>
            <person name="Markivic C."/>
            <person name="Fulton R."/>
            <person name="Tin-Wollam A.-M."/>
            <person name="Shah N."/>
            <person name="Pepin K."/>
            <person name="Nash W."/>
            <person name="Thiruvilangam P."/>
            <person name="Bhonagiri V."/>
            <person name="Waters C."/>
            <person name="Tu K.C."/>
            <person name="Irgon J."/>
            <person name="Wilson R.K."/>
        </authorList>
    </citation>
    <scope>NUCLEOTIDE SEQUENCE [LARGE SCALE GENOMIC DNA]</scope>
    <source>
        <strain>ATCC BAA-1116 / BB120</strain>
    </source>
</reference>
<feature type="chain" id="PRO_1000025623" description="GMP reductase">
    <location>
        <begin position="1"/>
        <end position="347"/>
    </location>
</feature>
<feature type="active site" description="Thioimidate intermediate" evidence="1">
    <location>
        <position position="186"/>
    </location>
</feature>
<feature type="binding site" evidence="1">
    <location>
        <begin position="108"/>
        <end position="131"/>
    </location>
    <ligand>
        <name>NADP(+)</name>
        <dbReference type="ChEBI" id="CHEBI:58349"/>
    </ligand>
</feature>
<feature type="binding site" evidence="1">
    <location>
        <position position="181"/>
    </location>
    <ligand>
        <name>K(+)</name>
        <dbReference type="ChEBI" id="CHEBI:29103"/>
    </ligand>
</feature>
<feature type="binding site" evidence="1">
    <location>
        <position position="183"/>
    </location>
    <ligand>
        <name>K(+)</name>
        <dbReference type="ChEBI" id="CHEBI:29103"/>
    </ligand>
</feature>
<feature type="binding site" evidence="1">
    <location>
        <begin position="216"/>
        <end position="239"/>
    </location>
    <ligand>
        <name>NADP(+)</name>
        <dbReference type="ChEBI" id="CHEBI:58349"/>
    </ligand>
</feature>
<gene>
    <name evidence="1" type="primary">guaC</name>
    <name type="ordered locus">VIBHAR_06224</name>
</gene>
<accession>A7N204</accession>
<organism>
    <name type="scientific">Vibrio campbellii (strain ATCC BAA-1116)</name>
    <dbReference type="NCBI Taxonomy" id="2902295"/>
    <lineage>
        <taxon>Bacteria</taxon>
        <taxon>Pseudomonadati</taxon>
        <taxon>Pseudomonadota</taxon>
        <taxon>Gammaproteobacteria</taxon>
        <taxon>Vibrionales</taxon>
        <taxon>Vibrionaceae</taxon>
        <taxon>Vibrio</taxon>
    </lineage>
</organism>
<keyword id="KW-0479">Metal-binding</keyword>
<keyword id="KW-0521">NADP</keyword>
<keyword id="KW-0560">Oxidoreductase</keyword>
<keyword id="KW-0630">Potassium</keyword>
<dbReference type="EC" id="1.7.1.7" evidence="1"/>
<dbReference type="EMBL" id="CP000790">
    <property type="protein sequence ID" value="ABU74116.1"/>
    <property type="molecule type" value="Genomic_DNA"/>
</dbReference>
<dbReference type="RefSeq" id="WP_012129706.1">
    <property type="nucleotide sequence ID" value="NC_009784.1"/>
</dbReference>
<dbReference type="SMR" id="A7N204"/>
<dbReference type="KEGG" id="vha:VIBHAR_06224"/>
<dbReference type="PATRIC" id="fig|338187.25.peg.4112"/>
<dbReference type="Proteomes" id="UP000008152">
    <property type="component" value="Chromosome II"/>
</dbReference>
<dbReference type="GO" id="GO:0005829">
    <property type="term" value="C:cytosol"/>
    <property type="evidence" value="ECO:0007669"/>
    <property type="project" value="TreeGrafter"/>
</dbReference>
<dbReference type="GO" id="GO:1902560">
    <property type="term" value="C:GMP reductase complex"/>
    <property type="evidence" value="ECO:0007669"/>
    <property type="project" value="InterPro"/>
</dbReference>
<dbReference type="GO" id="GO:0003920">
    <property type="term" value="F:GMP reductase activity"/>
    <property type="evidence" value="ECO:0007669"/>
    <property type="project" value="UniProtKB-UniRule"/>
</dbReference>
<dbReference type="GO" id="GO:0046872">
    <property type="term" value="F:metal ion binding"/>
    <property type="evidence" value="ECO:0007669"/>
    <property type="project" value="UniProtKB-KW"/>
</dbReference>
<dbReference type="GO" id="GO:0006163">
    <property type="term" value="P:purine nucleotide metabolic process"/>
    <property type="evidence" value="ECO:0007669"/>
    <property type="project" value="UniProtKB-UniRule"/>
</dbReference>
<dbReference type="CDD" id="cd00381">
    <property type="entry name" value="IMPDH"/>
    <property type="match status" value="1"/>
</dbReference>
<dbReference type="FunFam" id="3.20.20.70:FF:000012">
    <property type="entry name" value="GMP reductase"/>
    <property type="match status" value="1"/>
</dbReference>
<dbReference type="Gene3D" id="3.20.20.70">
    <property type="entry name" value="Aldolase class I"/>
    <property type="match status" value="1"/>
</dbReference>
<dbReference type="HAMAP" id="MF_00596">
    <property type="entry name" value="GMP_reduct_type1"/>
    <property type="match status" value="1"/>
</dbReference>
<dbReference type="InterPro" id="IPR013785">
    <property type="entry name" value="Aldolase_TIM"/>
</dbReference>
<dbReference type="InterPro" id="IPR050139">
    <property type="entry name" value="GMP_reductase"/>
</dbReference>
<dbReference type="InterPro" id="IPR005993">
    <property type="entry name" value="GMPR"/>
</dbReference>
<dbReference type="InterPro" id="IPR015875">
    <property type="entry name" value="IMP_DH/GMP_Rdtase_CS"/>
</dbReference>
<dbReference type="InterPro" id="IPR001093">
    <property type="entry name" value="IMP_DH_GMPRt"/>
</dbReference>
<dbReference type="NCBIfam" id="TIGR01305">
    <property type="entry name" value="GMP_reduct_1"/>
    <property type="match status" value="1"/>
</dbReference>
<dbReference type="NCBIfam" id="NF003470">
    <property type="entry name" value="PRK05096.1"/>
    <property type="match status" value="1"/>
</dbReference>
<dbReference type="PANTHER" id="PTHR43170">
    <property type="entry name" value="GMP REDUCTASE"/>
    <property type="match status" value="1"/>
</dbReference>
<dbReference type="PANTHER" id="PTHR43170:SF5">
    <property type="entry name" value="GMP REDUCTASE"/>
    <property type="match status" value="1"/>
</dbReference>
<dbReference type="Pfam" id="PF00478">
    <property type="entry name" value="IMPDH"/>
    <property type="match status" value="1"/>
</dbReference>
<dbReference type="PIRSF" id="PIRSF000235">
    <property type="entry name" value="GMP_reductase"/>
    <property type="match status" value="1"/>
</dbReference>
<dbReference type="SMART" id="SM01240">
    <property type="entry name" value="IMPDH"/>
    <property type="match status" value="1"/>
</dbReference>
<dbReference type="SUPFAM" id="SSF51412">
    <property type="entry name" value="Inosine monophosphate dehydrogenase (IMPDH)"/>
    <property type="match status" value="1"/>
</dbReference>
<dbReference type="PROSITE" id="PS00487">
    <property type="entry name" value="IMP_DH_GMP_RED"/>
    <property type="match status" value="1"/>
</dbReference>
<name>GUAC_VIBC1</name>
<sequence>MRIEQELKLGFKDVLFRPKRSTLKSRSQVNLTRDFTFKHSGRQWSGVPVIAANMDSVGSFAMAKALAEHGVMTAVHKHYTVEDWAEFANTADKATLNNVMVSTGTSEADFQKTKDIMAISDEFIFICIDIANGYSEHLVEYVQRVRAAFPDKVISAGNVVTGDMCEELILAGADIVKVGIGPGSVCTTRVKTGVGYPQLSAIIECGDAAHGLGGMIIGDGGCSCAGDVAKAFGGGADFVMLGGMLAGHEESGGEVIEQDGKQFMKFYGMSSKSAMDKHSGGVAGYRAAEGKTVLLPFRGSVHGTIQDILGGVRSTCTYVGAAKLKELTKRTTFIRVQEQENNVFGKE</sequence>
<protein>
    <recommendedName>
        <fullName evidence="1">GMP reductase</fullName>
        <ecNumber evidence="1">1.7.1.7</ecNumber>
    </recommendedName>
    <alternativeName>
        <fullName evidence="1">Guanosine 5'-monophosphate oxidoreductase</fullName>
        <shortName evidence="1">Guanosine monophosphate reductase</shortName>
    </alternativeName>
</protein>
<comment type="function">
    <text evidence="1">Catalyzes the irreversible NADPH-dependent deamination of GMP to IMP. It functions in the conversion of nucleobase, nucleoside and nucleotide derivatives of G to A nucleotides, and in maintaining the intracellular balance of A and G nucleotides.</text>
</comment>
<comment type="catalytic activity">
    <reaction evidence="1">
        <text>IMP + NH4(+) + NADP(+) = GMP + NADPH + 2 H(+)</text>
        <dbReference type="Rhea" id="RHEA:17185"/>
        <dbReference type="ChEBI" id="CHEBI:15378"/>
        <dbReference type="ChEBI" id="CHEBI:28938"/>
        <dbReference type="ChEBI" id="CHEBI:57783"/>
        <dbReference type="ChEBI" id="CHEBI:58053"/>
        <dbReference type="ChEBI" id="CHEBI:58115"/>
        <dbReference type="ChEBI" id="CHEBI:58349"/>
        <dbReference type="EC" id="1.7.1.7"/>
    </reaction>
</comment>
<comment type="subunit">
    <text evidence="1">Homotetramer.</text>
</comment>
<comment type="similarity">
    <text evidence="1">Belongs to the IMPDH/GMPR family. GuaC type 1 subfamily.</text>
</comment>